<sequence length="361" mass="40093">MSQKVANRSIVFYNSQSPPSVITEELDLGNCFSPSELVVKIHAAALNPVDFLLQGFAYSWLVGKGPKGFSRDYSGEVVKVGANVKDFKVGDKVSGLFQHLYGKQGTLCDYLILDPSKQPAISKISPVGHPEYDDYVINASWALVFGTAYQALHNYGQNLGPDSKVLVIGASTSVSNALIQIAKNRMKIGTVVGICSKKSFEYNKKLGYDYLAAYDDGSTVENVKQIMKNNMGNEKFDLIFDSVGNSEFFECINDVLKDKCQNSHYVSVTGDKKLNYSNPRIRDSLPGWESIRRIGPFRKYNYKLLLLKPEATFAKIGSEMIAQKQFVPAVDSVYAFEDYSKAFERLKSNKAKGKVVIQISQ</sequence>
<protein>
    <recommendedName>
        <fullName>Protein YIM1-2</fullName>
    </recommendedName>
</protein>
<accession>C5E3S5</accession>
<feature type="chain" id="PRO_0000409678" description="Protein YIM1-2">
    <location>
        <begin position="1"/>
        <end position="361"/>
    </location>
</feature>
<keyword id="KW-0551">Lipid droplet</keyword>
<keyword id="KW-0496">Mitochondrion</keyword>
<keyword id="KW-1185">Reference proteome</keyword>
<organism>
    <name type="scientific">Lachancea thermotolerans (strain ATCC 56472 / CBS 6340 / NRRL Y-8284)</name>
    <name type="common">Yeast</name>
    <name type="synonym">Kluyveromyces thermotolerans</name>
    <dbReference type="NCBI Taxonomy" id="559295"/>
    <lineage>
        <taxon>Eukaryota</taxon>
        <taxon>Fungi</taxon>
        <taxon>Dikarya</taxon>
        <taxon>Ascomycota</taxon>
        <taxon>Saccharomycotina</taxon>
        <taxon>Saccharomycetes</taxon>
        <taxon>Saccharomycetales</taxon>
        <taxon>Saccharomycetaceae</taxon>
        <taxon>Lachancea</taxon>
    </lineage>
</organism>
<gene>
    <name type="primary">YIM1-2</name>
    <name type="ordered locus">KLTH0H15950g</name>
</gene>
<dbReference type="EMBL" id="CU928180">
    <property type="protein sequence ID" value="CAR30686.1"/>
    <property type="molecule type" value="Genomic_DNA"/>
</dbReference>
<dbReference type="RefSeq" id="XP_002556548.1">
    <property type="nucleotide sequence ID" value="XM_002556502.1"/>
</dbReference>
<dbReference type="SMR" id="C5E3S5"/>
<dbReference type="FunCoup" id="C5E3S5">
    <property type="interactions" value="166"/>
</dbReference>
<dbReference type="GeneID" id="8294914"/>
<dbReference type="KEGG" id="lth:KLTH0H15950g"/>
<dbReference type="eggNOG" id="KOG1198">
    <property type="taxonomic scope" value="Eukaryota"/>
</dbReference>
<dbReference type="HOGENOM" id="CLU_026673_3_3_1"/>
<dbReference type="InParanoid" id="C5E3S5"/>
<dbReference type="OMA" id="GPLTYFT"/>
<dbReference type="OrthoDB" id="3509362at2759"/>
<dbReference type="Proteomes" id="UP000002036">
    <property type="component" value="Chromosome H"/>
</dbReference>
<dbReference type="GO" id="GO:0005811">
    <property type="term" value="C:lipid droplet"/>
    <property type="evidence" value="ECO:0007669"/>
    <property type="project" value="UniProtKB-SubCell"/>
</dbReference>
<dbReference type="GO" id="GO:0005739">
    <property type="term" value="C:mitochondrion"/>
    <property type="evidence" value="ECO:0007669"/>
    <property type="project" value="UniProtKB-SubCell"/>
</dbReference>
<dbReference type="GO" id="GO:0016491">
    <property type="term" value="F:oxidoreductase activity"/>
    <property type="evidence" value="ECO:0007669"/>
    <property type="project" value="InterPro"/>
</dbReference>
<dbReference type="CDD" id="cd08247">
    <property type="entry name" value="AST1_like"/>
    <property type="match status" value="1"/>
</dbReference>
<dbReference type="Gene3D" id="3.90.180.10">
    <property type="entry name" value="Medium-chain alcohol dehydrogenases, catalytic domain"/>
    <property type="match status" value="1"/>
</dbReference>
<dbReference type="Gene3D" id="3.40.50.720">
    <property type="entry name" value="NAD(P)-binding Rossmann-like Domain"/>
    <property type="match status" value="1"/>
</dbReference>
<dbReference type="InterPro" id="IPR013154">
    <property type="entry name" value="ADH-like_N"/>
</dbReference>
<dbReference type="InterPro" id="IPR011032">
    <property type="entry name" value="GroES-like_sf"/>
</dbReference>
<dbReference type="InterPro" id="IPR036291">
    <property type="entry name" value="NAD(P)-bd_dom_sf"/>
</dbReference>
<dbReference type="InterPro" id="IPR020843">
    <property type="entry name" value="PKS_ER"/>
</dbReference>
<dbReference type="InterPro" id="IPR050700">
    <property type="entry name" value="YIM1/Zinc_Alcohol_DH_Fams"/>
</dbReference>
<dbReference type="PANTHER" id="PTHR11695">
    <property type="entry name" value="ALCOHOL DEHYDROGENASE RELATED"/>
    <property type="match status" value="1"/>
</dbReference>
<dbReference type="PANTHER" id="PTHR11695:SF294">
    <property type="entry name" value="RETICULON-4-INTERACTING PROTEIN 1, MITOCHONDRIAL"/>
    <property type="match status" value="1"/>
</dbReference>
<dbReference type="Pfam" id="PF08240">
    <property type="entry name" value="ADH_N"/>
    <property type="match status" value="1"/>
</dbReference>
<dbReference type="Pfam" id="PF13602">
    <property type="entry name" value="ADH_zinc_N_2"/>
    <property type="match status" value="1"/>
</dbReference>
<dbReference type="SMART" id="SM00829">
    <property type="entry name" value="PKS_ER"/>
    <property type="match status" value="1"/>
</dbReference>
<dbReference type="SUPFAM" id="SSF50129">
    <property type="entry name" value="GroES-like"/>
    <property type="match status" value="1"/>
</dbReference>
<dbReference type="SUPFAM" id="SSF51735">
    <property type="entry name" value="NAD(P)-binding Rossmann-fold domains"/>
    <property type="match status" value="1"/>
</dbReference>
<evidence type="ECO:0000250" key="1"/>
<evidence type="ECO:0000305" key="2"/>
<proteinExistence type="inferred from homology"/>
<name>YIM12_LACTC</name>
<comment type="subcellular location">
    <subcellularLocation>
        <location evidence="1">Lipid droplet</location>
    </subcellularLocation>
    <subcellularLocation>
        <location evidence="1">Mitochondrion</location>
    </subcellularLocation>
</comment>
<comment type="similarity">
    <text evidence="2">Belongs to the YIM1 family.</text>
</comment>
<reference key="1">
    <citation type="journal article" date="2009" name="Genome Res.">
        <title>Comparative genomics of protoploid Saccharomycetaceae.</title>
        <authorList>
            <consortium name="The Genolevures Consortium"/>
            <person name="Souciet J.-L."/>
            <person name="Dujon B."/>
            <person name="Gaillardin C."/>
            <person name="Johnston M."/>
            <person name="Baret P.V."/>
            <person name="Cliften P."/>
            <person name="Sherman D.J."/>
            <person name="Weissenbach J."/>
            <person name="Westhof E."/>
            <person name="Wincker P."/>
            <person name="Jubin C."/>
            <person name="Poulain J."/>
            <person name="Barbe V."/>
            <person name="Segurens B."/>
            <person name="Artiguenave F."/>
            <person name="Anthouard V."/>
            <person name="Vacherie B."/>
            <person name="Val M.-E."/>
            <person name="Fulton R.S."/>
            <person name="Minx P."/>
            <person name="Wilson R."/>
            <person name="Durrens P."/>
            <person name="Jean G."/>
            <person name="Marck C."/>
            <person name="Martin T."/>
            <person name="Nikolski M."/>
            <person name="Rolland T."/>
            <person name="Seret M.-L."/>
            <person name="Casaregola S."/>
            <person name="Despons L."/>
            <person name="Fairhead C."/>
            <person name="Fischer G."/>
            <person name="Lafontaine I."/>
            <person name="Leh V."/>
            <person name="Lemaire M."/>
            <person name="de Montigny J."/>
            <person name="Neuveglise C."/>
            <person name="Thierry A."/>
            <person name="Blanc-Lenfle I."/>
            <person name="Bleykasten C."/>
            <person name="Diffels J."/>
            <person name="Fritsch E."/>
            <person name="Frangeul L."/>
            <person name="Goeffon A."/>
            <person name="Jauniaux N."/>
            <person name="Kachouri-Lafond R."/>
            <person name="Payen C."/>
            <person name="Potier S."/>
            <person name="Pribylova L."/>
            <person name="Ozanne C."/>
            <person name="Richard G.-F."/>
            <person name="Sacerdot C."/>
            <person name="Straub M.-L."/>
            <person name="Talla E."/>
        </authorList>
    </citation>
    <scope>NUCLEOTIDE SEQUENCE [LARGE SCALE GENOMIC DNA]</scope>
    <source>
        <strain>ATCC 56472 / CBS 6340 / NRRL Y-8284</strain>
    </source>
</reference>